<dbReference type="EC" id="1.3.1.98" evidence="1"/>
<dbReference type="EMBL" id="AE003849">
    <property type="protein sequence ID" value="AAF85369.1"/>
    <property type="molecule type" value="Genomic_DNA"/>
</dbReference>
<dbReference type="PIR" id="G82541">
    <property type="entry name" value="G82541"/>
</dbReference>
<dbReference type="RefSeq" id="WP_010894991.1">
    <property type="nucleotide sequence ID" value="NC_002488.3"/>
</dbReference>
<dbReference type="SMR" id="Q9PAE6"/>
<dbReference type="STRING" id="160492.XF_2572"/>
<dbReference type="KEGG" id="xfa:XF_2572"/>
<dbReference type="eggNOG" id="COG0812">
    <property type="taxonomic scope" value="Bacteria"/>
</dbReference>
<dbReference type="HOGENOM" id="CLU_035304_0_0_6"/>
<dbReference type="UniPathway" id="UPA00219"/>
<dbReference type="Proteomes" id="UP000000812">
    <property type="component" value="Chromosome"/>
</dbReference>
<dbReference type="GO" id="GO:0005829">
    <property type="term" value="C:cytosol"/>
    <property type="evidence" value="ECO:0007669"/>
    <property type="project" value="TreeGrafter"/>
</dbReference>
<dbReference type="GO" id="GO:0071949">
    <property type="term" value="F:FAD binding"/>
    <property type="evidence" value="ECO:0007669"/>
    <property type="project" value="InterPro"/>
</dbReference>
<dbReference type="GO" id="GO:0008762">
    <property type="term" value="F:UDP-N-acetylmuramate dehydrogenase activity"/>
    <property type="evidence" value="ECO:0007669"/>
    <property type="project" value="UniProtKB-UniRule"/>
</dbReference>
<dbReference type="GO" id="GO:0051301">
    <property type="term" value="P:cell division"/>
    <property type="evidence" value="ECO:0007669"/>
    <property type="project" value="UniProtKB-KW"/>
</dbReference>
<dbReference type="GO" id="GO:0071555">
    <property type="term" value="P:cell wall organization"/>
    <property type="evidence" value="ECO:0007669"/>
    <property type="project" value="UniProtKB-KW"/>
</dbReference>
<dbReference type="GO" id="GO:0009252">
    <property type="term" value="P:peptidoglycan biosynthetic process"/>
    <property type="evidence" value="ECO:0007669"/>
    <property type="project" value="UniProtKB-UniRule"/>
</dbReference>
<dbReference type="GO" id="GO:0008360">
    <property type="term" value="P:regulation of cell shape"/>
    <property type="evidence" value="ECO:0007669"/>
    <property type="project" value="UniProtKB-KW"/>
</dbReference>
<dbReference type="Gene3D" id="3.30.465.10">
    <property type="match status" value="1"/>
</dbReference>
<dbReference type="Gene3D" id="3.90.78.10">
    <property type="entry name" value="UDP-N-acetylenolpyruvoylglucosamine reductase, C-terminal domain"/>
    <property type="match status" value="1"/>
</dbReference>
<dbReference type="Gene3D" id="3.30.43.10">
    <property type="entry name" value="Uridine Diphospho-n-acetylenolpyruvylglucosamine Reductase, domain 2"/>
    <property type="match status" value="1"/>
</dbReference>
<dbReference type="HAMAP" id="MF_00037">
    <property type="entry name" value="MurB"/>
    <property type="match status" value="1"/>
</dbReference>
<dbReference type="InterPro" id="IPR016166">
    <property type="entry name" value="FAD-bd_PCMH"/>
</dbReference>
<dbReference type="InterPro" id="IPR036318">
    <property type="entry name" value="FAD-bd_PCMH-like_sf"/>
</dbReference>
<dbReference type="InterPro" id="IPR016167">
    <property type="entry name" value="FAD-bd_PCMH_sub1"/>
</dbReference>
<dbReference type="InterPro" id="IPR016169">
    <property type="entry name" value="FAD-bd_PCMH_sub2"/>
</dbReference>
<dbReference type="InterPro" id="IPR003170">
    <property type="entry name" value="MurB"/>
</dbReference>
<dbReference type="InterPro" id="IPR011601">
    <property type="entry name" value="MurB_C"/>
</dbReference>
<dbReference type="InterPro" id="IPR036635">
    <property type="entry name" value="MurB_C_sf"/>
</dbReference>
<dbReference type="InterPro" id="IPR006094">
    <property type="entry name" value="Oxid_FAD_bind_N"/>
</dbReference>
<dbReference type="NCBIfam" id="TIGR00179">
    <property type="entry name" value="murB"/>
    <property type="match status" value="1"/>
</dbReference>
<dbReference type="NCBIfam" id="NF000755">
    <property type="entry name" value="PRK00046.1"/>
    <property type="match status" value="1"/>
</dbReference>
<dbReference type="NCBIfam" id="NF010478">
    <property type="entry name" value="PRK13903.1"/>
    <property type="match status" value="1"/>
</dbReference>
<dbReference type="PANTHER" id="PTHR21071">
    <property type="entry name" value="UDP-N-ACETYLENOLPYRUVOYLGLUCOSAMINE REDUCTASE"/>
    <property type="match status" value="1"/>
</dbReference>
<dbReference type="PANTHER" id="PTHR21071:SF4">
    <property type="entry name" value="UDP-N-ACETYLENOLPYRUVOYLGLUCOSAMINE REDUCTASE"/>
    <property type="match status" value="1"/>
</dbReference>
<dbReference type="Pfam" id="PF01565">
    <property type="entry name" value="FAD_binding_4"/>
    <property type="match status" value="1"/>
</dbReference>
<dbReference type="Pfam" id="PF02873">
    <property type="entry name" value="MurB_C"/>
    <property type="match status" value="1"/>
</dbReference>
<dbReference type="SUPFAM" id="SSF56176">
    <property type="entry name" value="FAD-binding/transporter-associated domain-like"/>
    <property type="match status" value="1"/>
</dbReference>
<dbReference type="SUPFAM" id="SSF56194">
    <property type="entry name" value="Uridine diphospho-N-Acetylenolpyruvylglucosamine reductase, MurB, C-terminal domain"/>
    <property type="match status" value="1"/>
</dbReference>
<dbReference type="PROSITE" id="PS51387">
    <property type="entry name" value="FAD_PCMH"/>
    <property type="match status" value="1"/>
</dbReference>
<evidence type="ECO:0000255" key="1">
    <source>
        <dbReference type="HAMAP-Rule" id="MF_00037"/>
    </source>
</evidence>
<comment type="function">
    <text evidence="1">Cell wall formation.</text>
</comment>
<comment type="catalytic activity">
    <reaction evidence="1">
        <text>UDP-N-acetyl-alpha-D-muramate + NADP(+) = UDP-N-acetyl-3-O-(1-carboxyvinyl)-alpha-D-glucosamine + NADPH + H(+)</text>
        <dbReference type="Rhea" id="RHEA:12248"/>
        <dbReference type="ChEBI" id="CHEBI:15378"/>
        <dbReference type="ChEBI" id="CHEBI:57783"/>
        <dbReference type="ChEBI" id="CHEBI:58349"/>
        <dbReference type="ChEBI" id="CHEBI:68483"/>
        <dbReference type="ChEBI" id="CHEBI:70757"/>
        <dbReference type="EC" id="1.3.1.98"/>
    </reaction>
</comment>
<comment type="cofactor">
    <cofactor evidence="1">
        <name>FAD</name>
        <dbReference type="ChEBI" id="CHEBI:57692"/>
    </cofactor>
</comment>
<comment type="pathway">
    <text evidence="1">Cell wall biogenesis; peptidoglycan biosynthesis.</text>
</comment>
<comment type="subcellular location">
    <subcellularLocation>
        <location evidence="1">Cytoplasm</location>
    </subcellularLocation>
</comment>
<comment type="similarity">
    <text evidence="1">Belongs to the MurB family.</text>
</comment>
<sequence>MSLQINTPDWILHANAPLRDLNTFHIQAQARWLLEIIHPTALPQALTHPHIVGLPILVLGSGSNVLLAANPEECVLRFVNREVTILEHRINHALVRAGAGMAWHDLVLWSLQQGLSGLENLALIPGTVGACSIQNIGAYGVQVEEFVHIVEAYDQTEGQFVRLTASECEFAYRNSRFKREPNRYLIAAVEFRLPLLHELKLNYAGISEELEALQITLPEPRDVAQAVINLRRRKLPDPEVLSNAGSFFKNPYLPREQAEQLRQHHPTLPIYPGETPESNKLSAAWLIEQCGWKGIREGDAGVAPQHALVLVNYGEATGAELLALARRIAASVQERFGVAIEPETRLIGAQW</sequence>
<protein>
    <recommendedName>
        <fullName evidence="1">UDP-N-acetylenolpyruvoylglucosamine reductase</fullName>
        <ecNumber evidence="1">1.3.1.98</ecNumber>
    </recommendedName>
    <alternativeName>
        <fullName evidence="1">UDP-N-acetylmuramate dehydrogenase</fullName>
    </alternativeName>
</protein>
<gene>
    <name evidence="1" type="primary">murB</name>
    <name type="ordered locus">XF_2572</name>
</gene>
<organism>
    <name type="scientific">Xylella fastidiosa (strain 9a5c)</name>
    <dbReference type="NCBI Taxonomy" id="160492"/>
    <lineage>
        <taxon>Bacteria</taxon>
        <taxon>Pseudomonadati</taxon>
        <taxon>Pseudomonadota</taxon>
        <taxon>Gammaproteobacteria</taxon>
        <taxon>Lysobacterales</taxon>
        <taxon>Lysobacteraceae</taxon>
        <taxon>Xylella</taxon>
    </lineage>
</organism>
<proteinExistence type="inferred from homology"/>
<feature type="chain" id="PRO_0000179294" description="UDP-N-acetylenolpyruvoylglucosamine reductase">
    <location>
        <begin position="1"/>
        <end position="351"/>
    </location>
</feature>
<feature type="domain" description="FAD-binding PCMH-type" evidence="1">
    <location>
        <begin position="25"/>
        <end position="196"/>
    </location>
</feature>
<feature type="active site" evidence="1">
    <location>
        <position position="173"/>
    </location>
</feature>
<feature type="active site" description="Proton donor" evidence="1">
    <location>
        <position position="246"/>
    </location>
</feature>
<feature type="active site" evidence="1">
    <location>
        <position position="343"/>
    </location>
</feature>
<keyword id="KW-0131">Cell cycle</keyword>
<keyword id="KW-0132">Cell division</keyword>
<keyword id="KW-0133">Cell shape</keyword>
<keyword id="KW-0961">Cell wall biogenesis/degradation</keyword>
<keyword id="KW-0963">Cytoplasm</keyword>
<keyword id="KW-0274">FAD</keyword>
<keyword id="KW-0285">Flavoprotein</keyword>
<keyword id="KW-0521">NADP</keyword>
<keyword id="KW-0560">Oxidoreductase</keyword>
<keyword id="KW-0573">Peptidoglycan synthesis</keyword>
<accession>Q9PAE6</accession>
<reference key="1">
    <citation type="journal article" date="2000" name="Nature">
        <title>The genome sequence of the plant pathogen Xylella fastidiosa.</title>
        <authorList>
            <person name="Simpson A.J.G."/>
            <person name="Reinach F.C."/>
            <person name="Arruda P."/>
            <person name="Abreu F.A."/>
            <person name="Acencio M."/>
            <person name="Alvarenga R."/>
            <person name="Alves L.M.C."/>
            <person name="Araya J.E."/>
            <person name="Baia G.S."/>
            <person name="Baptista C.S."/>
            <person name="Barros M.H."/>
            <person name="Bonaccorsi E.D."/>
            <person name="Bordin S."/>
            <person name="Bove J.M."/>
            <person name="Briones M.R.S."/>
            <person name="Bueno M.R.P."/>
            <person name="Camargo A.A."/>
            <person name="Camargo L.E.A."/>
            <person name="Carraro D.M."/>
            <person name="Carrer H."/>
            <person name="Colauto N.B."/>
            <person name="Colombo C."/>
            <person name="Costa F.F."/>
            <person name="Costa M.C.R."/>
            <person name="Costa-Neto C.M."/>
            <person name="Coutinho L.L."/>
            <person name="Cristofani M."/>
            <person name="Dias-Neto E."/>
            <person name="Docena C."/>
            <person name="El-Dorry H."/>
            <person name="Facincani A.P."/>
            <person name="Ferreira A.J.S."/>
            <person name="Ferreira V.C.A."/>
            <person name="Ferro J.A."/>
            <person name="Fraga J.S."/>
            <person name="Franca S.C."/>
            <person name="Franco M.C."/>
            <person name="Frohme M."/>
            <person name="Furlan L.R."/>
            <person name="Garnier M."/>
            <person name="Goldman G.H."/>
            <person name="Goldman M.H.S."/>
            <person name="Gomes S.L."/>
            <person name="Gruber A."/>
            <person name="Ho P.L."/>
            <person name="Hoheisel J.D."/>
            <person name="Junqueira M.L."/>
            <person name="Kemper E.L."/>
            <person name="Kitajima J.P."/>
            <person name="Krieger J.E."/>
            <person name="Kuramae E.E."/>
            <person name="Laigret F."/>
            <person name="Lambais M.R."/>
            <person name="Leite L.C.C."/>
            <person name="Lemos E.G.M."/>
            <person name="Lemos M.V.F."/>
            <person name="Lopes S.A."/>
            <person name="Lopes C.R."/>
            <person name="Machado J.A."/>
            <person name="Machado M.A."/>
            <person name="Madeira A.M.B.N."/>
            <person name="Madeira H.M.F."/>
            <person name="Marino C.L."/>
            <person name="Marques M.V."/>
            <person name="Martins E.A.L."/>
            <person name="Martins E.M.F."/>
            <person name="Matsukuma A.Y."/>
            <person name="Menck C.F.M."/>
            <person name="Miracca E.C."/>
            <person name="Miyaki C.Y."/>
            <person name="Monteiro-Vitorello C.B."/>
            <person name="Moon D.H."/>
            <person name="Nagai M.A."/>
            <person name="Nascimento A.L.T.O."/>
            <person name="Netto L.E.S."/>
            <person name="Nhani A. Jr."/>
            <person name="Nobrega F.G."/>
            <person name="Nunes L.R."/>
            <person name="Oliveira M.A."/>
            <person name="de Oliveira M.C."/>
            <person name="de Oliveira R.C."/>
            <person name="Palmieri D.A."/>
            <person name="Paris A."/>
            <person name="Peixoto B.R."/>
            <person name="Pereira G.A.G."/>
            <person name="Pereira H.A. Jr."/>
            <person name="Pesquero J.B."/>
            <person name="Quaggio R.B."/>
            <person name="Roberto P.G."/>
            <person name="Rodrigues V."/>
            <person name="de Rosa A.J.M."/>
            <person name="de Rosa V.E. Jr."/>
            <person name="de Sa R.G."/>
            <person name="Santelli R.V."/>
            <person name="Sawasaki H.E."/>
            <person name="da Silva A.C.R."/>
            <person name="da Silva A.M."/>
            <person name="da Silva F.R."/>
            <person name="Silva W.A. Jr."/>
            <person name="da Silveira J.F."/>
            <person name="Silvestri M.L.Z."/>
            <person name="Siqueira W.J."/>
            <person name="de Souza A.A."/>
            <person name="de Souza A.P."/>
            <person name="Terenzi M.F."/>
            <person name="Truffi D."/>
            <person name="Tsai S.M."/>
            <person name="Tsuhako M.H."/>
            <person name="Vallada H."/>
            <person name="Van Sluys M.A."/>
            <person name="Verjovski-Almeida S."/>
            <person name="Vettore A.L."/>
            <person name="Zago M.A."/>
            <person name="Zatz M."/>
            <person name="Meidanis J."/>
            <person name="Setubal J.C."/>
        </authorList>
    </citation>
    <scope>NUCLEOTIDE SEQUENCE [LARGE SCALE GENOMIC DNA]</scope>
    <source>
        <strain>9a5c</strain>
    </source>
</reference>
<name>MURB_XYLFA</name>